<gene>
    <name evidence="1" type="primary">glsA</name>
    <name type="ordered locus">lpg0241</name>
</gene>
<name>GLSA_LEGPH</name>
<accession>Q5ZYX0</accession>
<feature type="chain" id="PRO_1000079075" description="Glutaminase">
    <location>
        <begin position="1"/>
        <end position="310"/>
    </location>
</feature>
<feature type="binding site" evidence="1">
    <location>
        <position position="67"/>
    </location>
    <ligand>
        <name>substrate</name>
    </ligand>
</feature>
<feature type="binding site" evidence="1">
    <location>
        <position position="118"/>
    </location>
    <ligand>
        <name>substrate</name>
    </ligand>
</feature>
<feature type="binding site" evidence="1">
    <location>
        <position position="161"/>
    </location>
    <ligand>
        <name>substrate</name>
    </ligand>
</feature>
<feature type="binding site" evidence="1">
    <location>
        <position position="168"/>
    </location>
    <ligand>
        <name>substrate</name>
    </ligand>
</feature>
<feature type="binding site" evidence="1">
    <location>
        <position position="192"/>
    </location>
    <ligand>
        <name>substrate</name>
    </ligand>
</feature>
<feature type="binding site" evidence="1">
    <location>
        <position position="244"/>
    </location>
    <ligand>
        <name>substrate</name>
    </ligand>
</feature>
<feature type="binding site" evidence="1">
    <location>
        <position position="262"/>
    </location>
    <ligand>
        <name>substrate</name>
    </ligand>
</feature>
<reference key="1">
    <citation type="journal article" date="2004" name="Science">
        <title>The genomic sequence of the accidental pathogen Legionella pneumophila.</title>
        <authorList>
            <person name="Chien M."/>
            <person name="Morozova I."/>
            <person name="Shi S."/>
            <person name="Sheng H."/>
            <person name="Chen J."/>
            <person name="Gomez S.M."/>
            <person name="Asamani G."/>
            <person name="Hill K."/>
            <person name="Nuara J."/>
            <person name="Feder M."/>
            <person name="Rineer J."/>
            <person name="Greenberg J.J."/>
            <person name="Steshenko V."/>
            <person name="Park S.H."/>
            <person name="Zhao B."/>
            <person name="Teplitskaya E."/>
            <person name="Edwards J.R."/>
            <person name="Pampou S."/>
            <person name="Georghiou A."/>
            <person name="Chou I.-C."/>
            <person name="Iannuccilli W."/>
            <person name="Ulz M.E."/>
            <person name="Kim D.H."/>
            <person name="Geringer-Sameth A."/>
            <person name="Goldsberry C."/>
            <person name="Morozov P."/>
            <person name="Fischer S.G."/>
            <person name="Segal G."/>
            <person name="Qu X."/>
            <person name="Rzhetsky A."/>
            <person name="Zhang P."/>
            <person name="Cayanis E."/>
            <person name="De Jong P.J."/>
            <person name="Ju J."/>
            <person name="Kalachikov S."/>
            <person name="Shuman H.A."/>
            <person name="Russo J.J."/>
        </authorList>
    </citation>
    <scope>NUCLEOTIDE SEQUENCE [LARGE SCALE GENOMIC DNA]</scope>
    <source>
        <strain>Philadelphia 1 / ATCC 33152 / DSM 7513</strain>
    </source>
</reference>
<organism>
    <name type="scientific">Legionella pneumophila subsp. pneumophila (strain Philadelphia 1 / ATCC 33152 / DSM 7513)</name>
    <dbReference type="NCBI Taxonomy" id="272624"/>
    <lineage>
        <taxon>Bacteria</taxon>
        <taxon>Pseudomonadati</taxon>
        <taxon>Pseudomonadota</taxon>
        <taxon>Gammaproteobacteria</taxon>
        <taxon>Legionellales</taxon>
        <taxon>Legionellaceae</taxon>
        <taxon>Legionella</taxon>
    </lineage>
</organism>
<sequence length="310" mass="33970">MSSKLLTIQLLEELVHAAELNQEGKTADYIPELANVNQELTAIAVQALGEKTLAYSNNPLHPVTLQSTGKMIPLIGLLEEFGADQLFEWVKVEPSGDDFASITRLEQFGPKPSNPMLNAGAIALCSRIPGIGEQQFRWLEHWVQKLFNQRLSINPLVFASEKRTGNRNRALAYLLKSRNNLGADVHETLDLYFALCSYEAMLDQMLYLPTLLANRGKDPDTGEQILSTETCKITLAIMATCGLYDETGTHMVKTGMPAKSGVSGYTIAVVPGKAGIVVLSPRVNAKGNSIRGEIMLEGLSKAMNWHFALP</sequence>
<comment type="catalytic activity">
    <reaction evidence="1">
        <text>L-glutamine + H2O = L-glutamate + NH4(+)</text>
        <dbReference type="Rhea" id="RHEA:15889"/>
        <dbReference type="ChEBI" id="CHEBI:15377"/>
        <dbReference type="ChEBI" id="CHEBI:28938"/>
        <dbReference type="ChEBI" id="CHEBI:29985"/>
        <dbReference type="ChEBI" id="CHEBI:58359"/>
        <dbReference type="EC" id="3.5.1.2"/>
    </reaction>
</comment>
<comment type="subunit">
    <text evidence="1">Homotetramer.</text>
</comment>
<comment type="similarity">
    <text evidence="1">Belongs to the glutaminase family.</text>
</comment>
<dbReference type="EC" id="3.5.1.2" evidence="1"/>
<dbReference type="EMBL" id="AE017354">
    <property type="protein sequence ID" value="AAU26348.1"/>
    <property type="molecule type" value="Genomic_DNA"/>
</dbReference>
<dbReference type="RefSeq" id="WP_010946002.1">
    <property type="nucleotide sequence ID" value="NC_002942.5"/>
</dbReference>
<dbReference type="RefSeq" id="YP_094295.1">
    <property type="nucleotide sequence ID" value="NC_002942.5"/>
</dbReference>
<dbReference type="SMR" id="Q5ZYX0"/>
<dbReference type="STRING" id="272624.lpg0241"/>
<dbReference type="PaxDb" id="272624-lpg0241"/>
<dbReference type="GeneID" id="57034246"/>
<dbReference type="KEGG" id="lpn:lpg0241"/>
<dbReference type="PATRIC" id="fig|272624.6.peg.255"/>
<dbReference type="eggNOG" id="COG2066">
    <property type="taxonomic scope" value="Bacteria"/>
</dbReference>
<dbReference type="HOGENOM" id="CLU_027932_1_0_6"/>
<dbReference type="OrthoDB" id="9788822at2"/>
<dbReference type="Proteomes" id="UP000000609">
    <property type="component" value="Chromosome"/>
</dbReference>
<dbReference type="GO" id="GO:0004359">
    <property type="term" value="F:glutaminase activity"/>
    <property type="evidence" value="ECO:0007669"/>
    <property type="project" value="UniProtKB-UniRule"/>
</dbReference>
<dbReference type="GO" id="GO:0006537">
    <property type="term" value="P:glutamate biosynthetic process"/>
    <property type="evidence" value="ECO:0007669"/>
    <property type="project" value="TreeGrafter"/>
</dbReference>
<dbReference type="GO" id="GO:0006543">
    <property type="term" value="P:glutamine catabolic process"/>
    <property type="evidence" value="ECO:0007669"/>
    <property type="project" value="TreeGrafter"/>
</dbReference>
<dbReference type="Gene3D" id="3.40.710.10">
    <property type="entry name" value="DD-peptidase/beta-lactamase superfamily"/>
    <property type="match status" value="1"/>
</dbReference>
<dbReference type="HAMAP" id="MF_00313">
    <property type="entry name" value="Glutaminase"/>
    <property type="match status" value="1"/>
</dbReference>
<dbReference type="InterPro" id="IPR012338">
    <property type="entry name" value="Beta-lactam/transpept-like"/>
</dbReference>
<dbReference type="InterPro" id="IPR015868">
    <property type="entry name" value="Glutaminase"/>
</dbReference>
<dbReference type="NCBIfam" id="TIGR03814">
    <property type="entry name" value="Gln_ase"/>
    <property type="match status" value="1"/>
</dbReference>
<dbReference type="PANTHER" id="PTHR12544">
    <property type="entry name" value="GLUTAMINASE"/>
    <property type="match status" value="1"/>
</dbReference>
<dbReference type="PANTHER" id="PTHR12544:SF29">
    <property type="entry name" value="GLUTAMINASE"/>
    <property type="match status" value="1"/>
</dbReference>
<dbReference type="Pfam" id="PF04960">
    <property type="entry name" value="Glutaminase"/>
    <property type="match status" value="1"/>
</dbReference>
<dbReference type="SUPFAM" id="SSF56601">
    <property type="entry name" value="beta-lactamase/transpeptidase-like"/>
    <property type="match status" value="1"/>
</dbReference>
<protein>
    <recommendedName>
        <fullName evidence="1">Glutaminase</fullName>
        <ecNumber evidence="1">3.5.1.2</ecNumber>
    </recommendedName>
</protein>
<evidence type="ECO:0000255" key="1">
    <source>
        <dbReference type="HAMAP-Rule" id="MF_00313"/>
    </source>
</evidence>
<keyword id="KW-0378">Hydrolase</keyword>
<keyword id="KW-1185">Reference proteome</keyword>
<proteinExistence type="inferred from homology"/>